<feature type="chain" id="PRO_0000292173" description="Probable lipid kinase YegS-like">
    <location>
        <begin position="1"/>
        <end position="296"/>
    </location>
</feature>
<feature type="domain" description="DAGKc" evidence="1">
    <location>
        <begin position="1"/>
        <end position="130"/>
    </location>
</feature>
<feature type="active site" description="Proton acceptor" evidence="1">
    <location>
        <position position="268"/>
    </location>
</feature>
<feature type="binding site" evidence="1">
    <location>
        <position position="37"/>
    </location>
    <ligand>
        <name>ATP</name>
        <dbReference type="ChEBI" id="CHEBI:30616"/>
    </ligand>
</feature>
<feature type="binding site" evidence="1">
    <location>
        <begin position="63"/>
        <end position="69"/>
    </location>
    <ligand>
        <name>ATP</name>
        <dbReference type="ChEBI" id="CHEBI:30616"/>
    </ligand>
</feature>
<feature type="binding site" evidence="1">
    <location>
        <position position="92"/>
    </location>
    <ligand>
        <name>ATP</name>
        <dbReference type="ChEBI" id="CHEBI:30616"/>
    </ligand>
</feature>
<feature type="binding site" evidence="1">
    <location>
        <position position="212"/>
    </location>
    <ligand>
        <name>Mg(2+)</name>
        <dbReference type="ChEBI" id="CHEBI:18420"/>
    </ligand>
</feature>
<feature type="binding site" evidence="1">
    <location>
        <position position="215"/>
    </location>
    <ligand>
        <name>Mg(2+)</name>
        <dbReference type="ChEBI" id="CHEBI:18420"/>
    </ligand>
</feature>
<feature type="binding site" evidence="1">
    <location>
        <position position="217"/>
    </location>
    <ligand>
        <name>Mg(2+)</name>
        <dbReference type="ChEBI" id="CHEBI:18420"/>
    </ligand>
</feature>
<dbReference type="EC" id="2.7.1.-" evidence="1"/>
<dbReference type="EMBL" id="CP000305">
    <property type="protein sequence ID" value="ABG17612.1"/>
    <property type="molecule type" value="Genomic_DNA"/>
</dbReference>
<dbReference type="EMBL" id="ACNQ01000008">
    <property type="protein sequence ID" value="EEO77727.1"/>
    <property type="molecule type" value="Genomic_DNA"/>
</dbReference>
<dbReference type="SMR" id="Q1CK68"/>
<dbReference type="KEGG" id="ypn:YPN_1282"/>
<dbReference type="HOGENOM" id="CLU_045532_1_1_6"/>
<dbReference type="Proteomes" id="UP000008936">
    <property type="component" value="Chromosome"/>
</dbReference>
<dbReference type="GO" id="GO:0005737">
    <property type="term" value="C:cytoplasm"/>
    <property type="evidence" value="ECO:0007669"/>
    <property type="project" value="UniProtKB-SubCell"/>
</dbReference>
<dbReference type="GO" id="GO:0005886">
    <property type="term" value="C:plasma membrane"/>
    <property type="evidence" value="ECO:0007669"/>
    <property type="project" value="TreeGrafter"/>
</dbReference>
<dbReference type="GO" id="GO:0005524">
    <property type="term" value="F:ATP binding"/>
    <property type="evidence" value="ECO:0007669"/>
    <property type="project" value="UniProtKB-UniRule"/>
</dbReference>
<dbReference type="GO" id="GO:0001727">
    <property type="term" value="F:lipid kinase activity"/>
    <property type="evidence" value="ECO:0007669"/>
    <property type="project" value="UniProtKB-UniRule"/>
</dbReference>
<dbReference type="GO" id="GO:0000287">
    <property type="term" value="F:magnesium ion binding"/>
    <property type="evidence" value="ECO:0007669"/>
    <property type="project" value="UniProtKB-UniRule"/>
</dbReference>
<dbReference type="GO" id="GO:0008654">
    <property type="term" value="P:phospholipid biosynthetic process"/>
    <property type="evidence" value="ECO:0007669"/>
    <property type="project" value="UniProtKB-UniRule"/>
</dbReference>
<dbReference type="Gene3D" id="2.60.200.40">
    <property type="match status" value="1"/>
</dbReference>
<dbReference type="Gene3D" id="3.40.50.10330">
    <property type="entry name" value="Probable inorganic polyphosphate/atp-NAD kinase, domain 1"/>
    <property type="match status" value="1"/>
</dbReference>
<dbReference type="HAMAP" id="MF_01377">
    <property type="entry name" value="YegS"/>
    <property type="match status" value="1"/>
</dbReference>
<dbReference type="InterPro" id="IPR017438">
    <property type="entry name" value="ATP-NAD_kinase_N"/>
</dbReference>
<dbReference type="InterPro" id="IPR005218">
    <property type="entry name" value="Diacylglycerol/lipid_kinase"/>
</dbReference>
<dbReference type="InterPro" id="IPR001206">
    <property type="entry name" value="Diacylglycerol_kinase_cat_dom"/>
</dbReference>
<dbReference type="InterPro" id="IPR022433">
    <property type="entry name" value="Lip_kinase_YegS"/>
</dbReference>
<dbReference type="InterPro" id="IPR050187">
    <property type="entry name" value="Lipid_Phosphate_FormReg"/>
</dbReference>
<dbReference type="InterPro" id="IPR016064">
    <property type="entry name" value="NAD/diacylglycerol_kinase_sf"/>
</dbReference>
<dbReference type="InterPro" id="IPR045540">
    <property type="entry name" value="YegS/DAGK_C"/>
</dbReference>
<dbReference type="NCBIfam" id="TIGR03702">
    <property type="entry name" value="lip_kinase_YegS"/>
    <property type="match status" value="1"/>
</dbReference>
<dbReference type="NCBIfam" id="NF009602">
    <property type="entry name" value="PRK13054.1"/>
    <property type="match status" value="1"/>
</dbReference>
<dbReference type="NCBIfam" id="TIGR00147">
    <property type="entry name" value="YegS/Rv2252/BmrU family lipid kinase"/>
    <property type="match status" value="1"/>
</dbReference>
<dbReference type="PANTHER" id="PTHR12358:SF106">
    <property type="entry name" value="LIPID KINASE YEGS"/>
    <property type="match status" value="1"/>
</dbReference>
<dbReference type="PANTHER" id="PTHR12358">
    <property type="entry name" value="SPHINGOSINE KINASE"/>
    <property type="match status" value="1"/>
</dbReference>
<dbReference type="Pfam" id="PF00781">
    <property type="entry name" value="DAGK_cat"/>
    <property type="match status" value="1"/>
</dbReference>
<dbReference type="Pfam" id="PF19279">
    <property type="entry name" value="YegS_C"/>
    <property type="match status" value="1"/>
</dbReference>
<dbReference type="SMART" id="SM00046">
    <property type="entry name" value="DAGKc"/>
    <property type="match status" value="1"/>
</dbReference>
<dbReference type="SUPFAM" id="SSF111331">
    <property type="entry name" value="NAD kinase/diacylglycerol kinase-like"/>
    <property type="match status" value="1"/>
</dbReference>
<dbReference type="PROSITE" id="PS50146">
    <property type="entry name" value="DAGK"/>
    <property type="match status" value="1"/>
</dbReference>
<proteinExistence type="inferred from homology"/>
<protein>
    <recommendedName>
        <fullName evidence="1">Probable lipid kinase YegS-like</fullName>
        <ecNumber evidence="1">2.7.1.-</ecNumber>
    </recommendedName>
</protein>
<organism>
    <name type="scientific">Yersinia pestis bv. Antiqua (strain Nepal516)</name>
    <dbReference type="NCBI Taxonomy" id="377628"/>
    <lineage>
        <taxon>Bacteria</taxon>
        <taxon>Pseudomonadati</taxon>
        <taxon>Pseudomonadota</taxon>
        <taxon>Gammaproteobacteria</taxon>
        <taxon>Enterobacterales</taxon>
        <taxon>Yersiniaceae</taxon>
        <taxon>Yersinia</taxon>
    </lineage>
</organism>
<keyword id="KW-0067">ATP-binding</keyword>
<keyword id="KW-0963">Cytoplasm</keyword>
<keyword id="KW-0418">Kinase</keyword>
<keyword id="KW-0444">Lipid biosynthesis</keyword>
<keyword id="KW-0443">Lipid metabolism</keyword>
<keyword id="KW-0460">Magnesium</keyword>
<keyword id="KW-0479">Metal-binding</keyword>
<keyword id="KW-0547">Nucleotide-binding</keyword>
<keyword id="KW-0594">Phospholipid biosynthesis</keyword>
<keyword id="KW-1208">Phospholipid metabolism</keyword>
<keyword id="KW-0808">Transferase</keyword>
<reference key="1">
    <citation type="journal article" date="2006" name="J. Bacteriol.">
        <title>Complete genome sequence of Yersinia pestis strains Antiqua and Nepal516: evidence of gene reduction in an emerging pathogen.</title>
        <authorList>
            <person name="Chain P.S.G."/>
            <person name="Hu P."/>
            <person name="Malfatti S.A."/>
            <person name="Radnedge L."/>
            <person name="Larimer F."/>
            <person name="Vergez L.M."/>
            <person name="Worsham P."/>
            <person name="Chu M.C."/>
            <person name="Andersen G.L."/>
        </authorList>
    </citation>
    <scope>NUCLEOTIDE SEQUENCE [LARGE SCALE GENOMIC DNA]</scope>
    <source>
        <strain>Nepal516</strain>
    </source>
</reference>
<reference key="2">
    <citation type="submission" date="2009-04" db="EMBL/GenBank/DDBJ databases">
        <title>Yersinia pestis Nepal516A whole genome shotgun sequencing project.</title>
        <authorList>
            <person name="Plunkett G. III"/>
            <person name="Anderson B.D."/>
            <person name="Baumler D.J."/>
            <person name="Burland V."/>
            <person name="Cabot E.L."/>
            <person name="Glasner J.D."/>
            <person name="Mau B."/>
            <person name="Neeno-Eckwall E."/>
            <person name="Perna N.T."/>
            <person name="Munk A.C."/>
            <person name="Tapia R."/>
            <person name="Green L.D."/>
            <person name="Rogers Y.C."/>
            <person name="Detter J.C."/>
            <person name="Bruce D.C."/>
            <person name="Brettin T.S."/>
        </authorList>
    </citation>
    <scope>NUCLEOTIDE SEQUENCE [LARGE SCALE GENOMIC DNA]</scope>
    <source>
        <strain>Nepal516</strain>
    </source>
</reference>
<sequence>MPHTLLILNGKESGNPEVREAVKNVRDEGLTLHVRITWEHGDAKRYVEEAATLAVSTVIAGGGDGTINEVATALMSLPADKRPCLGILPLGTANDFATGCNIPLQIENALQLAVKGRAVAIDLAQVNGEHYFINMATGGFGTRITTETPDKLKAALGGVSYFIHGLMRLDALKADSCKIHGPDFHWSGDALVIGIGNGKQAGGGQLLCPDALINDGLMQLRLLTAKELLPAVLSTLFNGEKNKNVIDATVPWLDITAPNDITFNLDGEPLSGRHFHIEILPHAIQCRLPPNCPLLG</sequence>
<name>YEGS_YERPN</name>
<evidence type="ECO:0000255" key="1">
    <source>
        <dbReference type="HAMAP-Rule" id="MF_01377"/>
    </source>
</evidence>
<gene>
    <name type="ordered locus">YPN_1282</name>
    <name type="ORF">YP516_1411</name>
</gene>
<accession>Q1CK68</accession>
<accession>C4GRN6</accession>
<comment type="function">
    <text evidence="1">Probably phosphorylates lipids; the in vivo substrate is unknown.</text>
</comment>
<comment type="cofactor">
    <cofactor evidence="1">
        <name>Mg(2+)</name>
        <dbReference type="ChEBI" id="CHEBI:18420"/>
    </cofactor>
    <cofactor evidence="1">
        <name>Ca(2+)</name>
        <dbReference type="ChEBI" id="CHEBI:29108"/>
    </cofactor>
    <text evidence="1">Binds 1 Mg(2+) ion per subunit. Ca(2+) may be able to substitute.</text>
</comment>
<comment type="subcellular location">
    <subcellularLocation>
        <location evidence="1">Cytoplasm</location>
    </subcellularLocation>
</comment>
<comment type="similarity">
    <text evidence="1">Belongs to the diacylglycerol/lipid kinase family. YegS lipid kinase subfamily.</text>
</comment>